<keyword id="KW-0396">Initiation factor</keyword>
<keyword id="KW-0648">Protein biosynthesis</keyword>
<sequence length="108" mass="12476">MPKKDRAQEAPSRDVPKPEEGQTICVVKKMLGGDHLVVLCMDGKERLARIPGKIRKKMWMREGDVVLVGIWDFQPNRCDILYKYGNDEIKRLVNENIISREVIDQLRG</sequence>
<protein>
    <recommendedName>
        <fullName evidence="1">Translation initiation factor 1A</fullName>
        <shortName evidence="1">aIF-1A</shortName>
    </recommendedName>
</protein>
<proteinExistence type="inferred from homology"/>
<reference key="1">
    <citation type="journal article" date="2009" name="Proc. Natl. Acad. Sci. U.S.A.">
        <title>Biogeography of the Sulfolobus islandicus pan-genome.</title>
        <authorList>
            <person name="Reno M.L."/>
            <person name="Held N.L."/>
            <person name="Fields C.J."/>
            <person name="Burke P.V."/>
            <person name="Whitaker R.J."/>
        </authorList>
    </citation>
    <scope>NUCLEOTIDE SEQUENCE [LARGE SCALE GENOMIC DNA]</scope>
    <source>
        <strain>M.16.27</strain>
    </source>
</reference>
<feature type="chain" id="PRO_1000204221" description="Translation initiation factor 1A">
    <location>
        <begin position="1"/>
        <end position="108"/>
    </location>
</feature>
<feature type="domain" description="S1-like" evidence="1">
    <location>
        <begin position="11"/>
        <end position="85"/>
    </location>
</feature>
<accession>C3N0P1</accession>
<evidence type="ECO:0000255" key="1">
    <source>
        <dbReference type="HAMAP-Rule" id="MF_00216"/>
    </source>
</evidence>
<organism>
    <name type="scientific">Saccharolobus islandicus (strain M.16.27)</name>
    <name type="common">Sulfolobus islandicus</name>
    <dbReference type="NCBI Taxonomy" id="427318"/>
    <lineage>
        <taxon>Archaea</taxon>
        <taxon>Thermoproteota</taxon>
        <taxon>Thermoprotei</taxon>
        <taxon>Sulfolobales</taxon>
        <taxon>Sulfolobaceae</taxon>
        <taxon>Saccharolobus</taxon>
    </lineage>
</organism>
<gene>
    <name type="primary">eIF1A</name>
    <name type="ordered locus">M1627_0172</name>
</gene>
<dbReference type="EMBL" id="CP001401">
    <property type="protein sequence ID" value="ACP54202.1"/>
    <property type="molecule type" value="Genomic_DNA"/>
</dbReference>
<dbReference type="RefSeq" id="WP_012710350.1">
    <property type="nucleotide sequence ID" value="NC_012632.1"/>
</dbReference>
<dbReference type="SMR" id="C3N0P1"/>
<dbReference type="KEGG" id="sim:M1627_0172"/>
<dbReference type="HOGENOM" id="CLU_109098_1_2_2"/>
<dbReference type="Proteomes" id="UP000002307">
    <property type="component" value="Chromosome"/>
</dbReference>
<dbReference type="GO" id="GO:0003723">
    <property type="term" value="F:RNA binding"/>
    <property type="evidence" value="ECO:0007669"/>
    <property type="project" value="InterPro"/>
</dbReference>
<dbReference type="GO" id="GO:0003743">
    <property type="term" value="F:translation initiation factor activity"/>
    <property type="evidence" value="ECO:0007669"/>
    <property type="project" value="UniProtKB-UniRule"/>
</dbReference>
<dbReference type="CDD" id="cd05793">
    <property type="entry name" value="S1_IF1A"/>
    <property type="match status" value="1"/>
</dbReference>
<dbReference type="Gene3D" id="2.40.50.140">
    <property type="entry name" value="Nucleic acid-binding proteins"/>
    <property type="match status" value="1"/>
</dbReference>
<dbReference type="HAMAP" id="MF_00216">
    <property type="entry name" value="aIF_1A"/>
    <property type="match status" value="1"/>
</dbReference>
<dbReference type="InterPro" id="IPR012340">
    <property type="entry name" value="NA-bd_OB-fold"/>
</dbReference>
<dbReference type="InterPro" id="IPR006196">
    <property type="entry name" value="RNA-binding_domain_S1_IF1"/>
</dbReference>
<dbReference type="InterPro" id="IPR001253">
    <property type="entry name" value="TIF_eIF-1A"/>
</dbReference>
<dbReference type="InterPro" id="IPR018104">
    <property type="entry name" value="TIF_eIF-1A_CS"/>
</dbReference>
<dbReference type="NCBIfam" id="TIGR00523">
    <property type="entry name" value="eIF-1A"/>
    <property type="match status" value="1"/>
</dbReference>
<dbReference type="NCBIfam" id="NF003082">
    <property type="entry name" value="PRK04012.1-1"/>
    <property type="match status" value="1"/>
</dbReference>
<dbReference type="NCBIfam" id="NF003084">
    <property type="entry name" value="PRK04012.1-3"/>
    <property type="match status" value="1"/>
</dbReference>
<dbReference type="NCBIfam" id="NF003085">
    <property type="entry name" value="PRK04012.1-5"/>
    <property type="match status" value="1"/>
</dbReference>
<dbReference type="PANTHER" id="PTHR21668">
    <property type="entry name" value="EIF-1A"/>
    <property type="match status" value="1"/>
</dbReference>
<dbReference type="Pfam" id="PF01176">
    <property type="entry name" value="eIF-1a"/>
    <property type="match status" value="1"/>
</dbReference>
<dbReference type="SMART" id="SM00652">
    <property type="entry name" value="eIF1a"/>
    <property type="match status" value="1"/>
</dbReference>
<dbReference type="SUPFAM" id="SSF50249">
    <property type="entry name" value="Nucleic acid-binding proteins"/>
    <property type="match status" value="1"/>
</dbReference>
<dbReference type="PROSITE" id="PS01262">
    <property type="entry name" value="IF1A"/>
    <property type="match status" value="1"/>
</dbReference>
<dbReference type="PROSITE" id="PS50832">
    <property type="entry name" value="S1_IF1_TYPE"/>
    <property type="match status" value="1"/>
</dbReference>
<comment type="function">
    <text evidence="1">Seems to be required for maximal rate of protein biosynthesis. Enhances ribosome dissociation into subunits and stabilizes the binding of the initiator Met-tRNA(I) to 40 S ribosomal subunits.</text>
</comment>
<comment type="similarity">
    <text evidence="1">Belongs to the eIF-1A family.</text>
</comment>
<name>IF1A_SACI3</name>